<proteinExistence type="inferred from homology"/>
<reference key="1">
    <citation type="journal article" date="2011" name="Proc. Natl. Acad. Sci. U.S.A.">
        <title>Genomic anatomy of Escherichia coli O157:H7 outbreaks.</title>
        <authorList>
            <person name="Eppinger M."/>
            <person name="Mammel M.K."/>
            <person name="Leclerc J.E."/>
            <person name="Ravel J."/>
            <person name="Cebula T.A."/>
        </authorList>
    </citation>
    <scope>NUCLEOTIDE SEQUENCE [LARGE SCALE GENOMIC DNA]</scope>
    <source>
        <strain>EC4115 / EHEC</strain>
    </source>
</reference>
<gene>
    <name evidence="1" type="primary">hdfR</name>
    <name type="ordered locus">ECH74115_5199</name>
</gene>
<evidence type="ECO:0000255" key="1">
    <source>
        <dbReference type="HAMAP-Rule" id="MF_01233"/>
    </source>
</evidence>
<evidence type="ECO:0000305" key="2"/>
<name>HDFR_ECO5E</name>
<accession>B5YY14</accession>
<comment type="function">
    <text evidence="1">Negatively regulates the transcription of the flagellar master operon flhDC by binding to the upstream region of the operon.</text>
</comment>
<comment type="similarity">
    <text evidence="2">Belongs to the LysR transcriptional regulatory family.</text>
</comment>
<organism>
    <name type="scientific">Escherichia coli O157:H7 (strain EC4115 / EHEC)</name>
    <dbReference type="NCBI Taxonomy" id="444450"/>
    <lineage>
        <taxon>Bacteria</taxon>
        <taxon>Pseudomonadati</taxon>
        <taxon>Pseudomonadota</taxon>
        <taxon>Gammaproteobacteria</taxon>
        <taxon>Enterobacterales</taxon>
        <taxon>Enterobacteriaceae</taxon>
        <taxon>Escherichia</taxon>
    </lineage>
</organism>
<keyword id="KW-0238">DNA-binding</keyword>
<keyword id="KW-0678">Repressor</keyword>
<keyword id="KW-0804">Transcription</keyword>
<keyword id="KW-0805">Transcription regulation</keyword>
<feature type="chain" id="PRO_1000139663" description="HTH-type transcriptional regulator HdfR">
    <location>
        <begin position="1"/>
        <end position="279"/>
    </location>
</feature>
<feature type="domain" description="HTH lysR-type" evidence="1">
    <location>
        <begin position="1"/>
        <end position="58"/>
    </location>
</feature>
<feature type="DNA-binding region" description="H-T-H motif" evidence="1">
    <location>
        <begin position="18"/>
        <end position="37"/>
    </location>
</feature>
<protein>
    <recommendedName>
        <fullName evidence="1">HTH-type transcriptional regulator HdfR</fullName>
    </recommendedName>
    <alternativeName>
        <fullName evidence="1">H-NS-dependent flhDC regulator</fullName>
    </alternativeName>
</protein>
<sequence length="279" mass="31776">MDTELLKTFLEVSRTRHFGRAAESLYLTQSAVSFRIRQLENQLGVNLFTRHRNNIRLTAAGEKLLPYAETLMSTWQAARKEVAHTSRHNEFSIGASASLWECMLNQWLGRLYQNQDAHTGLQFEARIAQRQSLVKQLHERQLDLLITTEAPKMDEFSSQLLGYFTLALYTSAPSKLKGDLNYLRLEWGPDFQQHEAGLIGADEVPILTTSSAELAQQQIAMLNGCTWLPVSWARKKGGLHTVVDSTTLSRPLYAIWLQNSDKNTLIRDLLKINVLDEVY</sequence>
<dbReference type="EMBL" id="CP001164">
    <property type="protein sequence ID" value="ACI35981.1"/>
    <property type="molecule type" value="Genomic_DNA"/>
</dbReference>
<dbReference type="RefSeq" id="WP_000379246.1">
    <property type="nucleotide sequence ID" value="NC_011353.1"/>
</dbReference>
<dbReference type="SMR" id="B5YY14"/>
<dbReference type="GeneID" id="75204755"/>
<dbReference type="KEGG" id="ecf:ECH74115_5199"/>
<dbReference type="HOGENOM" id="CLU_039613_8_2_6"/>
<dbReference type="GO" id="GO:0003677">
    <property type="term" value="F:DNA binding"/>
    <property type="evidence" value="ECO:0007669"/>
    <property type="project" value="UniProtKB-KW"/>
</dbReference>
<dbReference type="GO" id="GO:0003700">
    <property type="term" value="F:DNA-binding transcription factor activity"/>
    <property type="evidence" value="ECO:0007669"/>
    <property type="project" value="UniProtKB-UniRule"/>
</dbReference>
<dbReference type="GO" id="GO:0045892">
    <property type="term" value="P:negative regulation of DNA-templated transcription"/>
    <property type="evidence" value="ECO:0007669"/>
    <property type="project" value="UniProtKB-UniRule"/>
</dbReference>
<dbReference type="FunFam" id="1.10.10.10:FF:000001">
    <property type="entry name" value="LysR family transcriptional regulator"/>
    <property type="match status" value="1"/>
</dbReference>
<dbReference type="Gene3D" id="3.40.190.10">
    <property type="entry name" value="Periplasmic binding protein-like II"/>
    <property type="match status" value="2"/>
</dbReference>
<dbReference type="Gene3D" id="1.10.10.10">
    <property type="entry name" value="Winged helix-like DNA-binding domain superfamily/Winged helix DNA-binding domain"/>
    <property type="match status" value="1"/>
</dbReference>
<dbReference type="HAMAP" id="MF_01233">
    <property type="entry name" value="HTH_type_HdfR"/>
    <property type="match status" value="1"/>
</dbReference>
<dbReference type="InterPro" id="IPR050176">
    <property type="entry name" value="LTTR"/>
</dbReference>
<dbReference type="InterPro" id="IPR005119">
    <property type="entry name" value="LysR_subst-bd"/>
</dbReference>
<dbReference type="InterPro" id="IPR020890">
    <property type="entry name" value="Tscrpt_reg_HTH_HdfR"/>
</dbReference>
<dbReference type="InterPro" id="IPR000847">
    <property type="entry name" value="Tscrpt_reg_HTH_LysR"/>
</dbReference>
<dbReference type="InterPro" id="IPR036388">
    <property type="entry name" value="WH-like_DNA-bd_sf"/>
</dbReference>
<dbReference type="InterPro" id="IPR036390">
    <property type="entry name" value="WH_DNA-bd_sf"/>
</dbReference>
<dbReference type="NCBIfam" id="NF002946">
    <property type="entry name" value="PRK03601.1"/>
    <property type="match status" value="1"/>
</dbReference>
<dbReference type="PANTHER" id="PTHR30579:SF8">
    <property type="entry name" value="HTH-TYPE TRANSCRIPTIONAL REGULATOR HDFR"/>
    <property type="match status" value="1"/>
</dbReference>
<dbReference type="PANTHER" id="PTHR30579">
    <property type="entry name" value="TRANSCRIPTIONAL REGULATOR"/>
    <property type="match status" value="1"/>
</dbReference>
<dbReference type="Pfam" id="PF00126">
    <property type="entry name" value="HTH_1"/>
    <property type="match status" value="1"/>
</dbReference>
<dbReference type="Pfam" id="PF03466">
    <property type="entry name" value="LysR_substrate"/>
    <property type="match status" value="1"/>
</dbReference>
<dbReference type="PRINTS" id="PR00039">
    <property type="entry name" value="HTHLYSR"/>
</dbReference>
<dbReference type="SUPFAM" id="SSF53850">
    <property type="entry name" value="Periplasmic binding protein-like II"/>
    <property type="match status" value="1"/>
</dbReference>
<dbReference type="SUPFAM" id="SSF46785">
    <property type="entry name" value="Winged helix' DNA-binding domain"/>
    <property type="match status" value="1"/>
</dbReference>
<dbReference type="PROSITE" id="PS50931">
    <property type="entry name" value="HTH_LYSR"/>
    <property type="match status" value="1"/>
</dbReference>